<proteinExistence type="inferred from homology"/>
<sequence>MSEKTFLVEIGTEELPPKALRSLAESFAANFTAELDNAGLAHGNVEWFAAPRRLALKVANLAESQPDREVEKRGPAIAQAFDAEGKPSKAAEGWARGCGITVDQAERLKTDKGEWLLYRAHVKGESTEALVPNMVATSLAKLPIPKLMRWGASDVHFVRPVHTVTLLLGDKVIPATILGIQSDRVIRGHRFMGEPEFTIDNADQYPQILLERGKVIADYEARKAKIKADAEEAARKIGGNADLSESLLEEVASLVEWPVVLTAKFEEKFLSVPAEALVYTMKGDQKYFPVYDNAGKLLPNFIFVANIESKDPTQIISGNEKVVRPRLADAEFFFNTDRKKRLEDHLPRLQTVLFQQQLGTLRDKTDRIQALAGWIAGQIGADVNHATRAGLLSKCDLMTNMVFEFTDTQGVMGMHYARHDGEAEDVAVALNEQYQPRFAGDDLPSNPVACALAIADKMDTLAGIFGIGQHPKGDKDPFALRRAALGVLRIIVEKNLALDLQTLTEEAVRLYGDKLTNANVVDDVIDFMLGRFRAWYQDEGYTVDTIQAVLARRPTRPADFDARMKAVSHFRTLEEASALAAANKRVSNILAKATEPLNDIVHASVLKEAAEIELARHLVVLRDKLQPYFADGRYQEALIELAALRAPVDEFFENVMVNAEEKDIRINRLTLLSKLRELFLQVADISLLQ</sequence>
<feature type="chain" id="PRO_1000101334" description="Glycine--tRNA ligase beta subunit">
    <location>
        <begin position="1"/>
        <end position="689"/>
    </location>
</feature>
<name>SYGB_SALG2</name>
<comment type="catalytic activity">
    <reaction evidence="1">
        <text>tRNA(Gly) + glycine + ATP = glycyl-tRNA(Gly) + AMP + diphosphate</text>
        <dbReference type="Rhea" id="RHEA:16013"/>
        <dbReference type="Rhea" id="RHEA-COMP:9664"/>
        <dbReference type="Rhea" id="RHEA-COMP:9683"/>
        <dbReference type="ChEBI" id="CHEBI:30616"/>
        <dbReference type="ChEBI" id="CHEBI:33019"/>
        <dbReference type="ChEBI" id="CHEBI:57305"/>
        <dbReference type="ChEBI" id="CHEBI:78442"/>
        <dbReference type="ChEBI" id="CHEBI:78522"/>
        <dbReference type="ChEBI" id="CHEBI:456215"/>
        <dbReference type="EC" id="6.1.1.14"/>
    </reaction>
</comment>
<comment type="subunit">
    <text evidence="1">Tetramer of two alpha and two beta subunits.</text>
</comment>
<comment type="subcellular location">
    <subcellularLocation>
        <location evidence="1">Cytoplasm</location>
    </subcellularLocation>
</comment>
<comment type="similarity">
    <text evidence="1">Belongs to the class-II aminoacyl-tRNA synthetase family.</text>
</comment>
<reference key="1">
    <citation type="journal article" date="2008" name="Genome Res.">
        <title>Comparative genome analysis of Salmonella enteritidis PT4 and Salmonella gallinarum 287/91 provides insights into evolutionary and host adaptation pathways.</title>
        <authorList>
            <person name="Thomson N.R."/>
            <person name="Clayton D.J."/>
            <person name="Windhorst D."/>
            <person name="Vernikos G."/>
            <person name="Davidson S."/>
            <person name="Churcher C."/>
            <person name="Quail M.A."/>
            <person name="Stevens M."/>
            <person name="Jones M.A."/>
            <person name="Watson M."/>
            <person name="Barron A."/>
            <person name="Layton A."/>
            <person name="Pickard D."/>
            <person name="Kingsley R.A."/>
            <person name="Bignell A."/>
            <person name="Clark L."/>
            <person name="Harris B."/>
            <person name="Ormond D."/>
            <person name="Abdellah Z."/>
            <person name="Brooks K."/>
            <person name="Cherevach I."/>
            <person name="Chillingworth T."/>
            <person name="Woodward J."/>
            <person name="Norberczak H."/>
            <person name="Lord A."/>
            <person name="Arrowsmith C."/>
            <person name="Jagels K."/>
            <person name="Moule S."/>
            <person name="Mungall K."/>
            <person name="Saunders M."/>
            <person name="Whitehead S."/>
            <person name="Chabalgoity J.A."/>
            <person name="Maskell D."/>
            <person name="Humphreys T."/>
            <person name="Roberts M."/>
            <person name="Barrow P.A."/>
            <person name="Dougan G."/>
            <person name="Parkhill J."/>
        </authorList>
    </citation>
    <scope>NUCLEOTIDE SEQUENCE [LARGE SCALE GENOMIC DNA]</scope>
    <source>
        <strain>287/91 / NCTC 13346</strain>
    </source>
</reference>
<accession>B5RGM2</accession>
<organism>
    <name type="scientific">Salmonella gallinarum (strain 287/91 / NCTC 13346)</name>
    <dbReference type="NCBI Taxonomy" id="550538"/>
    <lineage>
        <taxon>Bacteria</taxon>
        <taxon>Pseudomonadati</taxon>
        <taxon>Pseudomonadota</taxon>
        <taxon>Gammaproteobacteria</taxon>
        <taxon>Enterobacterales</taxon>
        <taxon>Enterobacteriaceae</taxon>
        <taxon>Salmonella</taxon>
    </lineage>
</organism>
<dbReference type="EC" id="6.1.1.14" evidence="1"/>
<dbReference type="EMBL" id="AM933173">
    <property type="protein sequence ID" value="CAR39556.1"/>
    <property type="molecule type" value="Genomic_DNA"/>
</dbReference>
<dbReference type="RefSeq" id="WP_001291741.1">
    <property type="nucleotide sequence ID" value="NC_011274.1"/>
</dbReference>
<dbReference type="SMR" id="B5RGM2"/>
<dbReference type="KEGG" id="seg:SG3777"/>
<dbReference type="HOGENOM" id="CLU_007220_2_2_6"/>
<dbReference type="Proteomes" id="UP000008321">
    <property type="component" value="Chromosome"/>
</dbReference>
<dbReference type="GO" id="GO:0005829">
    <property type="term" value="C:cytosol"/>
    <property type="evidence" value="ECO:0007669"/>
    <property type="project" value="TreeGrafter"/>
</dbReference>
<dbReference type="GO" id="GO:0004814">
    <property type="term" value="F:arginine-tRNA ligase activity"/>
    <property type="evidence" value="ECO:0007669"/>
    <property type="project" value="InterPro"/>
</dbReference>
<dbReference type="GO" id="GO:0005524">
    <property type="term" value="F:ATP binding"/>
    <property type="evidence" value="ECO:0007669"/>
    <property type="project" value="UniProtKB-UniRule"/>
</dbReference>
<dbReference type="GO" id="GO:0004820">
    <property type="term" value="F:glycine-tRNA ligase activity"/>
    <property type="evidence" value="ECO:0007669"/>
    <property type="project" value="UniProtKB-UniRule"/>
</dbReference>
<dbReference type="GO" id="GO:0006420">
    <property type="term" value="P:arginyl-tRNA aminoacylation"/>
    <property type="evidence" value="ECO:0007669"/>
    <property type="project" value="InterPro"/>
</dbReference>
<dbReference type="GO" id="GO:0006426">
    <property type="term" value="P:glycyl-tRNA aminoacylation"/>
    <property type="evidence" value="ECO:0007669"/>
    <property type="project" value="UniProtKB-UniRule"/>
</dbReference>
<dbReference type="HAMAP" id="MF_00255">
    <property type="entry name" value="Gly_tRNA_synth_beta"/>
    <property type="match status" value="1"/>
</dbReference>
<dbReference type="InterPro" id="IPR008909">
    <property type="entry name" value="DALR_anticod-bd"/>
</dbReference>
<dbReference type="InterPro" id="IPR015944">
    <property type="entry name" value="Gly-tRNA-synth_bsu"/>
</dbReference>
<dbReference type="InterPro" id="IPR006194">
    <property type="entry name" value="Gly-tRNA-synth_heterodimer"/>
</dbReference>
<dbReference type="NCBIfam" id="TIGR00211">
    <property type="entry name" value="glyS"/>
    <property type="match status" value="1"/>
</dbReference>
<dbReference type="PANTHER" id="PTHR30075:SF2">
    <property type="entry name" value="GLYCINE--TRNA LIGASE, CHLOROPLASTIC_MITOCHONDRIAL 2"/>
    <property type="match status" value="1"/>
</dbReference>
<dbReference type="PANTHER" id="PTHR30075">
    <property type="entry name" value="GLYCYL-TRNA SYNTHETASE"/>
    <property type="match status" value="1"/>
</dbReference>
<dbReference type="Pfam" id="PF05746">
    <property type="entry name" value="DALR_1"/>
    <property type="match status" value="1"/>
</dbReference>
<dbReference type="Pfam" id="PF02092">
    <property type="entry name" value="tRNA_synt_2f"/>
    <property type="match status" value="1"/>
</dbReference>
<dbReference type="PRINTS" id="PR01045">
    <property type="entry name" value="TRNASYNTHGB"/>
</dbReference>
<dbReference type="SUPFAM" id="SSF109604">
    <property type="entry name" value="HD-domain/PDEase-like"/>
    <property type="match status" value="1"/>
</dbReference>
<dbReference type="PROSITE" id="PS50861">
    <property type="entry name" value="AA_TRNA_LIGASE_II_GLYAB"/>
    <property type="match status" value="1"/>
</dbReference>
<gene>
    <name evidence="1" type="primary">glyS</name>
    <name type="ordered locus">SG3777</name>
</gene>
<evidence type="ECO:0000255" key="1">
    <source>
        <dbReference type="HAMAP-Rule" id="MF_00255"/>
    </source>
</evidence>
<protein>
    <recommendedName>
        <fullName evidence="1">Glycine--tRNA ligase beta subunit</fullName>
        <ecNumber evidence="1">6.1.1.14</ecNumber>
    </recommendedName>
    <alternativeName>
        <fullName evidence="1">Glycyl-tRNA synthetase beta subunit</fullName>
        <shortName evidence="1">GlyRS</shortName>
    </alternativeName>
</protein>
<keyword id="KW-0030">Aminoacyl-tRNA synthetase</keyword>
<keyword id="KW-0067">ATP-binding</keyword>
<keyword id="KW-0963">Cytoplasm</keyword>
<keyword id="KW-0436">Ligase</keyword>
<keyword id="KW-0547">Nucleotide-binding</keyword>
<keyword id="KW-0648">Protein biosynthesis</keyword>